<feature type="signal peptide" evidence="2 3">
    <location>
        <begin position="1"/>
        <end position="15"/>
    </location>
</feature>
<feature type="chain" id="PRO_0000011188" description="Globin CTT-I/CTT-IA">
    <location>
        <begin position="16"/>
        <end position="158"/>
    </location>
</feature>
<feature type="domain" description="Globin" evidence="1">
    <location>
        <begin position="16"/>
        <end position="158"/>
    </location>
</feature>
<feature type="binding site" description="distal binding residue" evidence="1">
    <location>
        <position position="74"/>
    </location>
    <ligand>
        <name>heme b</name>
        <dbReference type="ChEBI" id="CHEBI:60344"/>
    </ligand>
    <ligandPart>
        <name>Fe</name>
        <dbReference type="ChEBI" id="CHEBI:18248"/>
    </ligandPart>
</feature>
<feature type="binding site" description="proximal binding residue" evidence="1">
    <location>
        <position position="109"/>
    </location>
    <ligand>
        <name>heme b</name>
        <dbReference type="ChEBI" id="CHEBI:60344"/>
    </ligand>
    <ligandPart>
        <name>Fe</name>
        <dbReference type="ChEBI" id="CHEBI:18248"/>
    </ligandPart>
</feature>
<feature type="sequence variant" description="In CTT-IA.">
    <original>A</original>
    <variation>T</variation>
    <location>
        <position position="113"/>
    </location>
</feature>
<dbReference type="EMBL" id="U14627">
    <property type="protein sequence ID" value="AAA80189.1"/>
    <property type="molecule type" value="Genomic_DNA"/>
</dbReference>
<dbReference type="EMBL" id="U14628">
    <property type="protein sequence ID" value="AAA80190.1"/>
    <property type="molecule type" value="Genomic_DNA"/>
</dbReference>
<dbReference type="EMBL" id="U14629">
    <property type="protein sequence ID" value="AAA80191.1"/>
    <property type="molecule type" value="Genomic_DNA"/>
</dbReference>
<dbReference type="EMBL" id="M57410">
    <property type="protein sequence ID" value="AAA62727.1"/>
    <property type="molecule type" value="mRNA"/>
</dbReference>
<dbReference type="PIR" id="A91690">
    <property type="entry name" value="GGICE1"/>
</dbReference>
<dbReference type="PIR" id="A91719">
    <property type="entry name" value="GGIC1A"/>
</dbReference>
<dbReference type="SMR" id="P02221"/>
<dbReference type="Allergome" id="1650">
    <property type="allergen name" value="Chi t 2"/>
</dbReference>
<dbReference type="Allergome" id="205">
    <property type="allergen name" value="Chi t 2.0101"/>
</dbReference>
<dbReference type="Allergome" id="206">
    <property type="allergen name" value="Chi t 2.0102"/>
</dbReference>
<dbReference type="GO" id="GO:0005576">
    <property type="term" value="C:extracellular region"/>
    <property type="evidence" value="ECO:0007669"/>
    <property type="project" value="InterPro"/>
</dbReference>
<dbReference type="GO" id="GO:0005833">
    <property type="term" value="C:hemoglobin complex"/>
    <property type="evidence" value="ECO:0007669"/>
    <property type="project" value="InterPro"/>
</dbReference>
<dbReference type="GO" id="GO:0020037">
    <property type="term" value="F:heme binding"/>
    <property type="evidence" value="ECO:0007669"/>
    <property type="project" value="InterPro"/>
</dbReference>
<dbReference type="GO" id="GO:0046872">
    <property type="term" value="F:metal ion binding"/>
    <property type="evidence" value="ECO:0007669"/>
    <property type="project" value="UniProtKB-KW"/>
</dbReference>
<dbReference type="GO" id="GO:0019825">
    <property type="term" value="F:oxygen binding"/>
    <property type="evidence" value="ECO:0007669"/>
    <property type="project" value="InterPro"/>
</dbReference>
<dbReference type="GO" id="GO:0005344">
    <property type="term" value="F:oxygen carrier activity"/>
    <property type="evidence" value="ECO:0007669"/>
    <property type="project" value="UniProtKB-KW"/>
</dbReference>
<dbReference type="CDD" id="cd01040">
    <property type="entry name" value="Mb-like"/>
    <property type="match status" value="1"/>
</dbReference>
<dbReference type="Gene3D" id="1.10.490.10">
    <property type="entry name" value="Globins"/>
    <property type="match status" value="1"/>
</dbReference>
<dbReference type="InterPro" id="IPR002336">
    <property type="entry name" value="Erythrocruorin"/>
</dbReference>
<dbReference type="InterPro" id="IPR000971">
    <property type="entry name" value="Globin"/>
</dbReference>
<dbReference type="InterPro" id="IPR009050">
    <property type="entry name" value="Globin-like_sf"/>
</dbReference>
<dbReference type="InterPro" id="IPR012292">
    <property type="entry name" value="Globin/Proto"/>
</dbReference>
<dbReference type="InterPro" id="IPR044399">
    <property type="entry name" value="Mb-like_M"/>
</dbReference>
<dbReference type="Pfam" id="PF00042">
    <property type="entry name" value="Globin"/>
    <property type="match status" value="1"/>
</dbReference>
<dbReference type="PRINTS" id="PR00611">
    <property type="entry name" value="ERYTHCRUORIN"/>
</dbReference>
<dbReference type="SUPFAM" id="SSF46458">
    <property type="entry name" value="Globin-like"/>
    <property type="match status" value="1"/>
</dbReference>
<dbReference type="PROSITE" id="PS01033">
    <property type="entry name" value="GLOBIN"/>
    <property type="match status" value="1"/>
</dbReference>
<reference key="1">
    <citation type="journal article" date="1995" name="J. Mol. Evol.">
        <title>Sequence and evolution of the gene for the monomeric globin I and its linkage to genes coding for dimeric globins in the insect Chironomus thummi.</title>
        <authorList>
            <person name="Kao W.-Y."/>
            <person name="Hankeln T."/>
            <person name="Schmidt E.R."/>
            <person name="Bergtrom G."/>
        </authorList>
    </citation>
    <scope>NUCLEOTIDE SEQUENCE [GENOMIC DNA] (CTT-I)</scope>
</reference>
<reference key="2">
    <citation type="journal article" date="1980" name="Hoppe-Seyler's Z. Physiol. Chem.">
        <title>Hemoglobin, XXXI. Analysis or the primary structure of the monomeric hemoglobin CTT I (erythrocruorin) of Chironomus thummi thummi, Diptera.</title>
        <authorList>
            <person name="Kleinschmidt T."/>
            <person name="von der Mark-Neuwirth H."/>
            <person name="Braunitzer G."/>
        </authorList>
    </citation>
    <scope>PROTEIN SEQUENCE OF 16-158 (CTT-I)</scope>
</reference>
<reference key="3">
    <citation type="journal article" date="1983" name="Hoppe-Seyler's Z. Physiol. Chem.">
        <title>The analysis of a protein-polymorphism. Evolution of monomeric and homodimeric haemoglobins (erythrocruorins) of Chironomus thummi thummi (Insecta, Diptera).</title>
        <authorList>
            <person name="Goodman M."/>
            <person name="Braunitzer G."/>
            <person name="Kleinschmidt T."/>
            <person name="Aschauer H."/>
        </authorList>
    </citation>
    <scope>PROTEIN SEQUENCE OF 16-158 (CTT-IA)</scope>
</reference>
<reference key="4">
    <citation type="journal article" date="1991" name="Gene">
        <title>Differential regulation of insect globin and actin mRNAs during larval development in Chironomus thummi.</title>
        <authorList>
            <person name="Saffarini D.A."/>
            <person name="Trewitt P.M."/>
            <person name="Luhm R.A."/>
            <person name="Bergtrom G."/>
        </authorList>
    </citation>
    <scope>NUCLEOTIDE SEQUENCE [MRNA] OF 83-158 (CTT-IA)</scope>
</reference>
<organism>
    <name type="scientific">Chironomus thummi thummi</name>
    <name type="common">Midge</name>
    <dbReference type="NCBI Taxonomy" id="7155"/>
    <lineage>
        <taxon>Eukaryota</taxon>
        <taxon>Metazoa</taxon>
        <taxon>Ecdysozoa</taxon>
        <taxon>Arthropoda</taxon>
        <taxon>Hexapoda</taxon>
        <taxon>Insecta</taxon>
        <taxon>Pterygota</taxon>
        <taxon>Neoptera</taxon>
        <taxon>Endopterygota</taxon>
        <taxon>Diptera</taxon>
        <taxon>Nematocera</taxon>
        <taxon>Chironomoidea</taxon>
        <taxon>Chironomidae</taxon>
        <taxon>Chironominae</taxon>
        <taxon>Chironomus</taxon>
    </lineage>
</organism>
<gene>
    <name type="primary">CTT-1</name>
</gene>
<sequence length="158" mass="17012">MKFLILALCVAAAMAGPSGDQIAAAKASWNTVKNNQVDILYAVFKANPDIQTAFSQFAGKDLDSIKGTPDFSKHAGRVVGLFSEVMDLLGNDANTPTILAKAKDFGKSHKSRASPAQLDNFRKSLVVYLKGATKWDSAVESSWAPVLDFVFSTLKNEL</sequence>
<proteinExistence type="evidence at protein level"/>
<accession>P02221</accession>
<comment type="subunit">
    <text>Monomer.</text>
</comment>
<comment type="miscellaneous">
    <text>There are at least 12 different components in Midge globin.</text>
</comment>
<comment type="similarity">
    <text evidence="1">Belongs to the globin family.</text>
</comment>
<protein>
    <recommendedName>
        <fullName>Globin CTT-I/CTT-IA</fullName>
    </recommendedName>
    <alternativeName>
        <fullName>Erythrocruorin</fullName>
    </alternativeName>
</protein>
<keyword id="KW-0903">Direct protein sequencing</keyword>
<keyword id="KW-0349">Heme</keyword>
<keyword id="KW-0408">Iron</keyword>
<keyword id="KW-0479">Metal-binding</keyword>
<keyword id="KW-0561">Oxygen transport</keyword>
<keyword id="KW-0732">Signal</keyword>
<keyword id="KW-0813">Transport</keyword>
<name>GLB1_CHITH</name>
<evidence type="ECO:0000255" key="1">
    <source>
        <dbReference type="PROSITE-ProRule" id="PRU00238"/>
    </source>
</evidence>
<evidence type="ECO:0000269" key="2">
    <source>
    </source>
</evidence>
<evidence type="ECO:0000269" key="3">
    <source>
    </source>
</evidence>